<comment type="function">
    <text evidence="1">Required for maturation of urease via the functional incorporation of the urease nickel metallocenter.</text>
</comment>
<comment type="subunit">
    <text evidence="1">UreD, UreF and UreG form a complex that acts as a GTP-hydrolysis-dependent molecular chaperone, activating the urease apoprotein by helping to assemble the nickel containing metallocenter of UreC. The UreE protein probably delivers the nickel.</text>
</comment>
<comment type="subcellular location">
    <subcellularLocation>
        <location evidence="1">Cytoplasm</location>
    </subcellularLocation>
</comment>
<comment type="similarity">
    <text evidence="1">Belongs to the UreD family.</text>
</comment>
<protein>
    <recommendedName>
        <fullName evidence="1">Urease accessory protein UreD</fullName>
    </recommendedName>
</protein>
<organism>
    <name type="scientific">Lachnoclostridium phytofermentans (strain ATCC 700394 / DSM 18823 / ISDg)</name>
    <name type="common">Clostridium phytofermentans</name>
    <dbReference type="NCBI Taxonomy" id="357809"/>
    <lineage>
        <taxon>Bacteria</taxon>
        <taxon>Bacillati</taxon>
        <taxon>Bacillota</taxon>
        <taxon>Clostridia</taxon>
        <taxon>Lachnospirales</taxon>
        <taxon>Lachnospiraceae</taxon>
    </lineage>
</organism>
<dbReference type="EMBL" id="CP000885">
    <property type="protein sequence ID" value="ABX41070.1"/>
    <property type="molecule type" value="Genomic_DNA"/>
</dbReference>
<dbReference type="RefSeq" id="WP_012198713.1">
    <property type="nucleotide sequence ID" value="NC_010001.1"/>
</dbReference>
<dbReference type="SMR" id="A9KJR5"/>
<dbReference type="STRING" id="357809.Cphy_0683"/>
<dbReference type="KEGG" id="cpy:Cphy_0683"/>
<dbReference type="eggNOG" id="COG0829">
    <property type="taxonomic scope" value="Bacteria"/>
</dbReference>
<dbReference type="HOGENOM" id="CLU_056339_5_0_9"/>
<dbReference type="OrthoDB" id="9807968at2"/>
<dbReference type="Proteomes" id="UP000000370">
    <property type="component" value="Chromosome"/>
</dbReference>
<dbReference type="GO" id="GO:0005737">
    <property type="term" value="C:cytoplasm"/>
    <property type="evidence" value="ECO:0007669"/>
    <property type="project" value="UniProtKB-SubCell"/>
</dbReference>
<dbReference type="GO" id="GO:0016151">
    <property type="term" value="F:nickel cation binding"/>
    <property type="evidence" value="ECO:0007669"/>
    <property type="project" value="UniProtKB-UniRule"/>
</dbReference>
<dbReference type="HAMAP" id="MF_01384">
    <property type="entry name" value="UreD"/>
    <property type="match status" value="1"/>
</dbReference>
<dbReference type="InterPro" id="IPR002669">
    <property type="entry name" value="UreD"/>
</dbReference>
<dbReference type="PANTHER" id="PTHR33643">
    <property type="entry name" value="UREASE ACCESSORY PROTEIN D"/>
    <property type="match status" value="1"/>
</dbReference>
<dbReference type="PANTHER" id="PTHR33643:SF1">
    <property type="entry name" value="UREASE ACCESSORY PROTEIN D"/>
    <property type="match status" value="1"/>
</dbReference>
<dbReference type="Pfam" id="PF01774">
    <property type="entry name" value="UreD"/>
    <property type="match status" value="1"/>
</dbReference>
<proteinExistence type="inferred from homology"/>
<evidence type="ECO:0000255" key="1">
    <source>
        <dbReference type="HAMAP-Rule" id="MF_01384"/>
    </source>
</evidence>
<reference key="1">
    <citation type="submission" date="2007-11" db="EMBL/GenBank/DDBJ databases">
        <title>Complete genome sequence of Clostridium phytofermentans ISDg.</title>
        <authorList>
            <person name="Leschine S.B."/>
            <person name="Warnick T.A."/>
            <person name="Blanchard J.L."/>
            <person name="Schnell D.J."/>
            <person name="Petit E.L."/>
            <person name="LaTouf W.G."/>
            <person name="Copeland A."/>
            <person name="Lucas S."/>
            <person name="Lapidus A."/>
            <person name="Barry K."/>
            <person name="Glavina del Rio T."/>
            <person name="Dalin E."/>
            <person name="Tice H."/>
            <person name="Pitluck S."/>
            <person name="Kiss H."/>
            <person name="Brettin T."/>
            <person name="Bruce D."/>
            <person name="Detter J.C."/>
            <person name="Han C."/>
            <person name="Kuske C."/>
            <person name="Schmutz J."/>
            <person name="Larimer F."/>
            <person name="Land M."/>
            <person name="Hauser L."/>
            <person name="Kyrpides N."/>
            <person name="Kim E.A."/>
            <person name="Richardson P."/>
        </authorList>
    </citation>
    <scope>NUCLEOTIDE SEQUENCE [LARGE SCALE GENOMIC DNA]</scope>
    <source>
        <strain>ATCC 700394 / DSM 18823 / ISDg</strain>
    </source>
</reference>
<feature type="chain" id="PRO_0000346559" description="Urease accessory protein UreD">
    <location>
        <begin position="1"/>
        <end position="274"/>
    </location>
</feature>
<gene>
    <name evidence="1" type="primary">ureD</name>
    <name type="ordered locus">Cphy_0683</name>
</gene>
<accession>A9KJR5</accession>
<name>URED_LACP7</name>
<keyword id="KW-0143">Chaperone</keyword>
<keyword id="KW-0963">Cytoplasm</keyword>
<keyword id="KW-0996">Nickel insertion</keyword>
<keyword id="KW-1185">Reference proteome</keyword>
<sequence>MTNYTGYLQLSTEKKRGKTIAQDMYFYGAFKLMNPFYLNNDEQACFYIMNPGGGYVDGDTYRMDIHLAKEAQLLLTTQSASKIYKTPKNPVVQEINITLKEGSLLEYLPDPIIGYKNSRYKQKTIVHMEKGTSLIATDIITSGWDPKGNLFSYHMLDLNTKVYLEDNLILLDHIRLTPGSQSLSSIGQFEEYSHLGTMIVVSEYTDESLISMLYDVMETQNLKCRYGLSMLSKPGFMLRVLASSTQEVMRAFDICHKLIRMKWYKRSPVFLGKY</sequence>